<dbReference type="EMBL" id="CP001252">
    <property type="protein sequence ID" value="ACK48779.1"/>
    <property type="molecule type" value="Genomic_DNA"/>
</dbReference>
<dbReference type="RefSeq" id="WP_006083842.1">
    <property type="nucleotide sequence ID" value="NC_011663.1"/>
</dbReference>
<dbReference type="SMR" id="B8EDV3"/>
<dbReference type="GeneID" id="11774463"/>
<dbReference type="KEGG" id="sbp:Sbal223_4313"/>
<dbReference type="HOGENOM" id="CLU_085114_3_0_6"/>
<dbReference type="Proteomes" id="UP000002507">
    <property type="component" value="Chromosome"/>
</dbReference>
<dbReference type="GO" id="GO:0005886">
    <property type="term" value="C:plasma membrane"/>
    <property type="evidence" value="ECO:0007669"/>
    <property type="project" value="UniProtKB-SubCell"/>
</dbReference>
<dbReference type="GO" id="GO:0045259">
    <property type="term" value="C:proton-transporting ATP synthase complex"/>
    <property type="evidence" value="ECO:0007669"/>
    <property type="project" value="UniProtKB-KW"/>
</dbReference>
<dbReference type="GO" id="GO:0046933">
    <property type="term" value="F:proton-transporting ATP synthase activity, rotational mechanism"/>
    <property type="evidence" value="ECO:0007669"/>
    <property type="project" value="UniProtKB-UniRule"/>
</dbReference>
<dbReference type="Gene3D" id="1.10.520.20">
    <property type="entry name" value="N-terminal domain of the delta subunit of the F1F0-ATP synthase"/>
    <property type="match status" value="1"/>
</dbReference>
<dbReference type="HAMAP" id="MF_01416">
    <property type="entry name" value="ATP_synth_delta_bact"/>
    <property type="match status" value="1"/>
</dbReference>
<dbReference type="InterPro" id="IPR026015">
    <property type="entry name" value="ATP_synth_OSCP/delta_N_sf"/>
</dbReference>
<dbReference type="InterPro" id="IPR020781">
    <property type="entry name" value="ATPase_OSCP/d_CS"/>
</dbReference>
<dbReference type="InterPro" id="IPR000711">
    <property type="entry name" value="ATPase_OSCP/dsu"/>
</dbReference>
<dbReference type="NCBIfam" id="TIGR01145">
    <property type="entry name" value="ATP_synt_delta"/>
    <property type="match status" value="1"/>
</dbReference>
<dbReference type="NCBIfam" id="NF004402">
    <property type="entry name" value="PRK05758.2-2"/>
    <property type="match status" value="1"/>
</dbReference>
<dbReference type="NCBIfam" id="NF004404">
    <property type="entry name" value="PRK05758.2-5"/>
    <property type="match status" value="1"/>
</dbReference>
<dbReference type="PANTHER" id="PTHR11910">
    <property type="entry name" value="ATP SYNTHASE DELTA CHAIN"/>
    <property type="match status" value="1"/>
</dbReference>
<dbReference type="Pfam" id="PF00213">
    <property type="entry name" value="OSCP"/>
    <property type="match status" value="1"/>
</dbReference>
<dbReference type="PRINTS" id="PR00125">
    <property type="entry name" value="ATPASEDELTA"/>
</dbReference>
<dbReference type="SUPFAM" id="SSF47928">
    <property type="entry name" value="N-terminal domain of the delta subunit of the F1F0-ATP synthase"/>
    <property type="match status" value="1"/>
</dbReference>
<dbReference type="PROSITE" id="PS00389">
    <property type="entry name" value="ATPASE_DELTA"/>
    <property type="match status" value="1"/>
</dbReference>
<reference key="1">
    <citation type="submission" date="2008-12" db="EMBL/GenBank/DDBJ databases">
        <title>Complete sequence of chromosome of Shewanella baltica OS223.</title>
        <authorList>
            <consortium name="US DOE Joint Genome Institute"/>
            <person name="Lucas S."/>
            <person name="Copeland A."/>
            <person name="Lapidus A."/>
            <person name="Glavina del Rio T."/>
            <person name="Dalin E."/>
            <person name="Tice H."/>
            <person name="Bruce D."/>
            <person name="Goodwin L."/>
            <person name="Pitluck S."/>
            <person name="Chertkov O."/>
            <person name="Meincke L."/>
            <person name="Brettin T."/>
            <person name="Detter J.C."/>
            <person name="Han C."/>
            <person name="Kuske C.R."/>
            <person name="Larimer F."/>
            <person name="Land M."/>
            <person name="Hauser L."/>
            <person name="Kyrpides N."/>
            <person name="Ovchinnikova G."/>
            <person name="Brettar I."/>
            <person name="Rodrigues J."/>
            <person name="Konstantinidis K."/>
            <person name="Tiedje J."/>
        </authorList>
    </citation>
    <scope>NUCLEOTIDE SEQUENCE [LARGE SCALE GENOMIC DNA]</scope>
    <source>
        <strain>OS223</strain>
    </source>
</reference>
<keyword id="KW-0066">ATP synthesis</keyword>
<keyword id="KW-0997">Cell inner membrane</keyword>
<keyword id="KW-1003">Cell membrane</keyword>
<keyword id="KW-0139">CF(1)</keyword>
<keyword id="KW-0375">Hydrogen ion transport</keyword>
<keyword id="KW-0406">Ion transport</keyword>
<keyword id="KW-0472">Membrane</keyword>
<keyword id="KW-0813">Transport</keyword>
<name>ATPD_SHEB2</name>
<sequence>MAELTTIARPYAKAAFDFAIEQDAVDSWAEMLTFAALVSENETMQPLLAGSLASTKLAALFISVCGEQVNVQGQNLIKVMAENGRLKVLPAVSQLFTEYRNEWAKEVEADVVSATELSSEQQQQISISLEKRLARKVKLNCSTDAALIAGVIIKTGDLVIDGSVRGKLSRLSDKLQS</sequence>
<protein>
    <recommendedName>
        <fullName evidence="1">ATP synthase subunit delta</fullName>
    </recommendedName>
    <alternativeName>
        <fullName evidence="1">ATP synthase F(1) sector subunit delta</fullName>
    </alternativeName>
    <alternativeName>
        <fullName evidence="1">F-type ATPase subunit delta</fullName>
        <shortName evidence="1">F-ATPase subunit delta</shortName>
    </alternativeName>
</protein>
<feature type="chain" id="PRO_1000184789" description="ATP synthase subunit delta">
    <location>
        <begin position="1"/>
        <end position="177"/>
    </location>
</feature>
<gene>
    <name evidence="1" type="primary">atpH</name>
    <name type="ordered locus">Sbal223_4313</name>
</gene>
<comment type="function">
    <text evidence="1">F(1)F(0) ATP synthase produces ATP from ADP in the presence of a proton or sodium gradient. F-type ATPases consist of two structural domains, F(1) containing the extramembraneous catalytic core and F(0) containing the membrane proton channel, linked together by a central stalk and a peripheral stalk. During catalysis, ATP synthesis in the catalytic domain of F(1) is coupled via a rotary mechanism of the central stalk subunits to proton translocation.</text>
</comment>
<comment type="function">
    <text evidence="1">This protein is part of the stalk that links CF(0) to CF(1). It either transmits conformational changes from CF(0) to CF(1) or is implicated in proton conduction.</text>
</comment>
<comment type="subunit">
    <text evidence="1">F-type ATPases have 2 components, F(1) - the catalytic core - and F(0) - the membrane proton channel. F(1) has five subunits: alpha(3), beta(3), gamma(1), delta(1), epsilon(1). F(0) has three main subunits: a(1), b(2) and c(10-14). The alpha and beta chains form an alternating ring which encloses part of the gamma chain. F(1) is attached to F(0) by a central stalk formed by the gamma and epsilon chains, while a peripheral stalk is formed by the delta and b chains.</text>
</comment>
<comment type="subcellular location">
    <subcellularLocation>
        <location evidence="1">Cell inner membrane</location>
        <topology evidence="1">Peripheral membrane protein</topology>
    </subcellularLocation>
</comment>
<comment type="similarity">
    <text evidence="1">Belongs to the ATPase delta chain family.</text>
</comment>
<evidence type="ECO:0000255" key="1">
    <source>
        <dbReference type="HAMAP-Rule" id="MF_01416"/>
    </source>
</evidence>
<accession>B8EDV3</accession>
<organism>
    <name type="scientific">Shewanella baltica (strain OS223)</name>
    <dbReference type="NCBI Taxonomy" id="407976"/>
    <lineage>
        <taxon>Bacteria</taxon>
        <taxon>Pseudomonadati</taxon>
        <taxon>Pseudomonadota</taxon>
        <taxon>Gammaproteobacteria</taxon>
        <taxon>Alteromonadales</taxon>
        <taxon>Shewanellaceae</taxon>
        <taxon>Shewanella</taxon>
    </lineage>
</organism>
<proteinExistence type="inferred from homology"/>